<sequence length="378" mass="41189">MNHSDTLSLSLELLQQPSVTPIDHTCQTIMADRLAKVGFHIEPMRFGDVDNLWARRGTEGPVFCFAGHTDVVPTGRLDAWNSDPFAPEIRDGKLYGRGSADMKTALAAMVVASERFVAKHPNHKGSIAFLITSDEEGPAVNGTVKVIETLEKRNEKITWCLVGEPSSTHKLGDIVKNGRRGSLNAVLKVQGKQGHVAYPHLARNPIHEASPALAELCQTVWDNGNEYFPATSFQISNIHAGTGATNVIPGALEVTFNFRYSTEVTAEQLKQRVHEILDKHGLQYEIVWNLSGLPFLTPVGELVNAAQTAILNVTGTETELSTSGGTSDGRFIAPTGAQVLELGVLNATIHQINEHVDVHDLDPLTDIYEQILENLLAQ</sequence>
<evidence type="ECO:0000255" key="1">
    <source>
        <dbReference type="HAMAP-Rule" id="MF_01690"/>
    </source>
</evidence>
<evidence type="ECO:0007829" key="2">
    <source>
        <dbReference type="PDB" id="8F8O"/>
    </source>
</evidence>
<dbReference type="EC" id="3.5.1.18" evidence="1"/>
<dbReference type="EMBL" id="CP000521">
    <property type="protein sequence ID" value="ABO13216.2"/>
    <property type="molecule type" value="Genomic_DNA"/>
</dbReference>
<dbReference type="RefSeq" id="WP_001016573.1">
    <property type="nucleotide sequence ID" value="NZ_CP053098.1"/>
</dbReference>
<dbReference type="PDB" id="7T1Q">
    <property type="method" value="X-ray"/>
    <property type="resolution" value="2.25 A"/>
    <property type="chains" value="A/B=1-378"/>
</dbReference>
<dbReference type="PDB" id="8F8O">
    <property type="method" value="X-ray"/>
    <property type="resolution" value="2.10 A"/>
    <property type="chains" value="A/B=1-378"/>
</dbReference>
<dbReference type="PDBsum" id="7T1Q"/>
<dbReference type="PDBsum" id="8F8O"/>
<dbReference type="SMR" id="A3M8H2"/>
<dbReference type="KEGG" id="acb:A1S_2810"/>
<dbReference type="HOGENOM" id="CLU_021802_4_0_6"/>
<dbReference type="UniPathway" id="UPA00034">
    <property type="reaction ID" value="UER00021"/>
</dbReference>
<dbReference type="GO" id="GO:0008777">
    <property type="term" value="F:acetylornithine deacetylase activity"/>
    <property type="evidence" value="ECO:0007669"/>
    <property type="project" value="TreeGrafter"/>
</dbReference>
<dbReference type="GO" id="GO:0050897">
    <property type="term" value="F:cobalt ion binding"/>
    <property type="evidence" value="ECO:0007669"/>
    <property type="project" value="UniProtKB-UniRule"/>
</dbReference>
<dbReference type="GO" id="GO:0009014">
    <property type="term" value="F:succinyl-diaminopimelate desuccinylase activity"/>
    <property type="evidence" value="ECO:0007669"/>
    <property type="project" value="UniProtKB-UniRule"/>
</dbReference>
<dbReference type="GO" id="GO:0008270">
    <property type="term" value="F:zinc ion binding"/>
    <property type="evidence" value="ECO:0007669"/>
    <property type="project" value="UniProtKB-UniRule"/>
</dbReference>
<dbReference type="GO" id="GO:0019877">
    <property type="term" value="P:diaminopimelate biosynthetic process"/>
    <property type="evidence" value="ECO:0007669"/>
    <property type="project" value="UniProtKB-UniRule"/>
</dbReference>
<dbReference type="GO" id="GO:0006526">
    <property type="term" value="P:L-arginine biosynthetic process"/>
    <property type="evidence" value="ECO:0007669"/>
    <property type="project" value="TreeGrafter"/>
</dbReference>
<dbReference type="GO" id="GO:0009089">
    <property type="term" value="P:lysine biosynthetic process via diaminopimelate"/>
    <property type="evidence" value="ECO:0007669"/>
    <property type="project" value="UniProtKB-UniRule"/>
</dbReference>
<dbReference type="CDD" id="cd03891">
    <property type="entry name" value="M20_DapE_proteobac"/>
    <property type="match status" value="1"/>
</dbReference>
<dbReference type="FunFam" id="3.30.70.360:FF:000011">
    <property type="entry name" value="Succinyl-diaminopimelate desuccinylase"/>
    <property type="match status" value="1"/>
</dbReference>
<dbReference type="FunFam" id="3.40.630.10:FF:000005">
    <property type="entry name" value="Succinyl-diaminopimelate desuccinylase"/>
    <property type="match status" value="1"/>
</dbReference>
<dbReference type="Gene3D" id="3.40.630.10">
    <property type="entry name" value="Zn peptidases"/>
    <property type="match status" value="2"/>
</dbReference>
<dbReference type="HAMAP" id="MF_01690">
    <property type="entry name" value="DapE"/>
    <property type="match status" value="1"/>
</dbReference>
<dbReference type="InterPro" id="IPR036264">
    <property type="entry name" value="Bact_exopeptidase_dim_dom"/>
</dbReference>
<dbReference type="InterPro" id="IPR005941">
    <property type="entry name" value="DapE_proteobac"/>
</dbReference>
<dbReference type="InterPro" id="IPR002933">
    <property type="entry name" value="Peptidase_M20"/>
</dbReference>
<dbReference type="InterPro" id="IPR011650">
    <property type="entry name" value="Peptidase_M20_dimer"/>
</dbReference>
<dbReference type="InterPro" id="IPR050072">
    <property type="entry name" value="Peptidase_M20A"/>
</dbReference>
<dbReference type="NCBIfam" id="TIGR01246">
    <property type="entry name" value="dapE_proteo"/>
    <property type="match status" value="1"/>
</dbReference>
<dbReference type="NCBIfam" id="NF009557">
    <property type="entry name" value="PRK13009.1"/>
    <property type="match status" value="1"/>
</dbReference>
<dbReference type="PANTHER" id="PTHR43808">
    <property type="entry name" value="ACETYLORNITHINE DEACETYLASE"/>
    <property type="match status" value="1"/>
</dbReference>
<dbReference type="PANTHER" id="PTHR43808:SF31">
    <property type="entry name" value="N-ACETYL-L-CITRULLINE DEACETYLASE"/>
    <property type="match status" value="1"/>
</dbReference>
<dbReference type="Pfam" id="PF07687">
    <property type="entry name" value="M20_dimer"/>
    <property type="match status" value="1"/>
</dbReference>
<dbReference type="Pfam" id="PF01546">
    <property type="entry name" value="Peptidase_M20"/>
    <property type="match status" value="1"/>
</dbReference>
<dbReference type="SUPFAM" id="SSF55031">
    <property type="entry name" value="Bacterial exopeptidase dimerisation domain"/>
    <property type="match status" value="1"/>
</dbReference>
<dbReference type="SUPFAM" id="SSF53187">
    <property type="entry name" value="Zn-dependent exopeptidases"/>
    <property type="match status" value="1"/>
</dbReference>
<feature type="chain" id="PRO_0000375445" description="Succinyl-diaminopimelate desuccinylase">
    <location>
        <begin position="1"/>
        <end position="378"/>
    </location>
</feature>
<feature type="active site" evidence="1">
    <location>
        <position position="70"/>
    </location>
</feature>
<feature type="active site" description="Proton acceptor" evidence="1">
    <location>
        <position position="135"/>
    </location>
</feature>
<feature type="binding site" evidence="1">
    <location>
        <position position="68"/>
    </location>
    <ligand>
        <name>Zn(2+)</name>
        <dbReference type="ChEBI" id="CHEBI:29105"/>
        <label>1</label>
    </ligand>
</feature>
<feature type="binding site" evidence="1">
    <location>
        <position position="101"/>
    </location>
    <ligand>
        <name>Zn(2+)</name>
        <dbReference type="ChEBI" id="CHEBI:29105"/>
        <label>1</label>
    </ligand>
</feature>
<feature type="binding site" evidence="1">
    <location>
        <position position="101"/>
    </location>
    <ligand>
        <name>Zn(2+)</name>
        <dbReference type="ChEBI" id="CHEBI:29105"/>
        <label>2</label>
    </ligand>
</feature>
<feature type="binding site" evidence="1">
    <location>
        <position position="136"/>
    </location>
    <ligand>
        <name>Zn(2+)</name>
        <dbReference type="ChEBI" id="CHEBI:29105"/>
        <label>2</label>
    </ligand>
</feature>
<feature type="binding site" evidence="1">
    <location>
        <position position="164"/>
    </location>
    <ligand>
        <name>Zn(2+)</name>
        <dbReference type="ChEBI" id="CHEBI:29105"/>
        <label>1</label>
    </ligand>
</feature>
<feature type="binding site" evidence="1">
    <location>
        <position position="350"/>
    </location>
    <ligand>
        <name>Zn(2+)</name>
        <dbReference type="ChEBI" id="CHEBI:29105"/>
        <label>2</label>
    </ligand>
</feature>
<feature type="helix" evidence="2">
    <location>
        <begin position="5"/>
        <end position="14"/>
    </location>
</feature>
<feature type="helix" evidence="2">
    <location>
        <begin position="26"/>
        <end position="34"/>
    </location>
</feature>
<feature type="helix" evidence="2">
    <location>
        <begin position="35"/>
        <end position="37"/>
    </location>
</feature>
<feature type="strand" evidence="2">
    <location>
        <begin position="40"/>
        <end position="43"/>
    </location>
</feature>
<feature type="strand" evidence="2">
    <location>
        <begin position="51"/>
        <end position="56"/>
    </location>
</feature>
<feature type="strand" evidence="2">
    <location>
        <begin position="58"/>
        <end position="68"/>
    </location>
</feature>
<feature type="strand" evidence="2">
    <location>
        <begin position="88"/>
        <end position="90"/>
    </location>
</feature>
<feature type="strand" evidence="2">
    <location>
        <begin position="93"/>
        <end position="96"/>
    </location>
</feature>
<feature type="turn" evidence="2">
    <location>
        <begin position="97"/>
        <end position="102"/>
    </location>
</feature>
<feature type="helix" evidence="2">
    <location>
        <begin position="103"/>
        <end position="119"/>
    </location>
</feature>
<feature type="strand" evidence="2">
    <location>
        <begin position="124"/>
        <end position="133"/>
    </location>
</feature>
<feature type="strand" evidence="2">
    <location>
        <begin position="135"/>
        <end position="137"/>
    </location>
</feature>
<feature type="strand" evidence="2">
    <location>
        <begin position="140"/>
        <end position="142"/>
    </location>
</feature>
<feature type="helix" evidence="2">
    <location>
        <begin position="143"/>
        <end position="152"/>
    </location>
</feature>
<feature type="strand" evidence="2">
    <location>
        <begin position="158"/>
        <end position="162"/>
    </location>
</feature>
<feature type="strand" evidence="2">
    <location>
        <begin position="167"/>
        <end position="170"/>
    </location>
</feature>
<feature type="strand" evidence="2">
    <location>
        <begin position="173"/>
        <end position="179"/>
    </location>
</feature>
<feature type="strand" evidence="2">
    <location>
        <begin position="181"/>
        <end position="190"/>
    </location>
</feature>
<feature type="helix" evidence="2">
    <location>
        <begin position="199"/>
        <end position="201"/>
    </location>
</feature>
<feature type="helix" evidence="2">
    <location>
        <begin position="205"/>
        <end position="218"/>
    </location>
</feature>
<feature type="strand" evidence="2">
    <location>
        <begin position="226"/>
        <end position="228"/>
    </location>
</feature>
<feature type="strand" evidence="2">
    <location>
        <begin position="232"/>
        <end position="240"/>
    </location>
</feature>
<feature type="strand" evidence="2">
    <location>
        <begin position="250"/>
        <end position="260"/>
    </location>
</feature>
<feature type="helix" evidence="2">
    <location>
        <begin position="266"/>
        <end position="279"/>
    </location>
</feature>
<feature type="strand" evidence="2">
    <location>
        <begin position="284"/>
        <end position="292"/>
    </location>
</feature>
<feature type="helix" evidence="2">
    <location>
        <begin position="301"/>
        <end position="314"/>
    </location>
</feature>
<feature type="strand" evidence="2">
    <location>
        <begin position="319"/>
        <end position="321"/>
    </location>
</feature>
<feature type="helix" evidence="2">
    <location>
        <begin position="329"/>
        <end position="332"/>
    </location>
</feature>
<feature type="helix" evidence="2">
    <location>
        <begin position="333"/>
        <end position="335"/>
    </location>
</feature>
<feature type="strand" evidence="2">
    <location>
        <begin position="338"/>
        <end position="341"/>
    </location>
</feature>
<feature type="turn" evidence="2">
    <location>
        <begin position="347"/>
        <end position="350"/>
    </location>
</feature>
<feature type="strand" evidence="2">
    <location>
        <begin position="355"/>
        <end position="357"/>
    </location>
</feature>
<feature type="helix" evidence="2">
    <location>
        <begin position="358"/>
        <end position="360"/>
    </location>
</feature>
<feature type="helix" evidence="2">
    <location>
        <begin position="361"/>
        <end position="376"/>
    </location>
</feature>
<name>DAPE_ACIBT</name>
<proteinExistence type="evidence at protein level"/>
<organism>
    <name type="scientific">Acinetobacter baumannii (strain ATCC 17978 / DSM 105126 / CIP 53.77 / LMG 1025 / NCDC KC755 / 5377)</name>
    <dbReference type="NCBI Taxonomy" id="400667"/>
    <lineage>
        <taxon>Bacteria</taxon>
        <taxon>Pseudomonadati</taxon>
        <taxon>Pseudomonadota</taxon>
        <taxon>Gammaproteobacteria</taxon>
        <taxon>Moraxellales</taxon>
        <taxon>Moraxellaceae</taxon>
        <taxon>Acinetobacter</taxon>
        <taxon>Acinetobacter calcoaceticus/baumannii complex</taxon>
    </lineage>
</organism>
<gene>
    <name evidence="1" type="primary">dapE</name>
    <name type="ordered locus">A1S_2810</name>
</gene>
<reference key="1">
    <citation type="journal article" date="2007" name="Genes Dev.">
        <title>New insights into Acinetobacter baumannii pathogenesis revealed by high-density pyrosequencing and transposon mutagenesis.</title>
        <authorList>
            <person name="Smith M.G."/>
            <person name="Gianoulis T.A."/>
            <person name="Pukatzki S."/>
            <person name="Mekalanos J.J."/>
            <person name="Ornston L.N."/>
            <person name="Gerstein M."/>
            <person name="Snyder M."/>
        </authorList>
    </citation>
    <scope>NUCLEOTIDE SEQUENCE [LARGE SCALE GENOMIC DNA]</scope>
    <source>
        <strain>ATCC 17978 / DSM 105126 / CIP 53.77 / LMG 1025 / NCDC KC755 / 5377</strain>
    </source>
</reference>
<protein>
    <recommendedName>
        <fullName evidence="1">Succinyl-diaminopimelate desuccinylase</fullName>
        <shortName evidence="1">SDAP desuccinylase</shortName>
        <ecNumber evidence="1">3.5.1.18</ecNumber>
    </recommendedName>
    <alternativeName>
        <fullName evidence="1">N-succinyl-LL-2,6-diaminoheptanedioate amidohydrolase</fullName>
    </alternativeName>
</protein>
<comment type="function">
    <text evidence="1">Catalyzes the hydrolysis of N-succinyl-L,L-diaminopimelic acid (SDAP), forming succinate and LL-2,6-diaminopimelate (DAP), an intermediate involved in the bacterial biosynthesis of lysine and meso-diaminopimelic acid, an essential component of bacterial cell walls.</text>
</comment>
<comment type="catalytic activity">
    <reaction evidence="1">
        <text>N-succinyl-(2S,6S)-2,6-diaminopimelate + H2O = (2S,6S)-2,6-diaminopimelate + succinate</text>
        <dbReference type="Rhea" id="RHEA:22608"/>
        <dbReference type="ChEBI" id="CHEBI:15377"/>
        <dbReference type="ChEBI" id="CHEBI:30031"/>
        <dbReference type="ChEBI" id="CHEBI:57609"/>
        <dbReference type="ChEBI" id="CHEBI:58087"/>
        <dbReference type="EC" id="3.5.1.18"/>
    </reaction>
</comment>
<comment type="cofactor">
    <cofactor evidence="1">
        <name>Zn(2+)</name>
        <dbReference type="ChEBI" id="CHEBI:29105"/>
    </cofactor>
    <cofactor evidence="1">
        <name>Co(2+)</name>
        <dbReference type="ChEBI" id="CHEBI:48828"/>
    </cofactor>
    <text evidence="1">Binds 2 Zn(2+) or Co(2+) ions per subunit.</text>
</comment>
<comment type="pathway">
    <text evidence="1">Amino-acid biosynthesis; L-lysine biosynthesis via DAP pathway; LL-2,6-diaminopimelate from (S)-tetrahydrodipicolinate (succinylase route): step 3/3.</text>
</comment>
<comment type="subunit">
    <text evidence="1">Homodimer.</text>
</comment>
<comment type="similarity">
    <text evidence="1">Belongs to the peptidase M20A family. DapE subfamily.</text>
</comment>
<keyword id="KW-0002">3D-structure</keyword>
<keyword id="KW-0028">Amino-acid biosynthesis</keyword>
<keyword id="KW-0170">Cobalt</keyword>
<keyword id="KW-0220">Diaminopimelate biosynthesis</keyword>
<keyword id="KW-0378">Hydrolase</keyword>
<keyword id="KW-0457">Lysine biosynthesis</keyword>
<keyword id="KW-0479">Metal-binding</keyword>
<keyword id="KW-0862">Zinc</keyword>
<accession>A3M8H2</accession>